<protein>
    <recommendedName>
        <fullName evidence="1">Glucose-6-phosphate isomerase</fullName>
        <shortName evidence="1">GPI</shortName>
        <ecNumber evidence="1">5.3.1.9</ecNumber>
    </recommendedName>
    <alternativeName>
        <fullName evidence="1">Phosphoglucose isomerase</fullName>
        <shortName evidence="1">PGI</shortName>
    </alternativeName>
    <alternativeName>
        <fullName evidence="1">Phosphohexose isomerase</fullName>
        <shortName evidence="1">PHI</shortName>
    </alternativeName>
</protein>
<gene>
    <name evidence="1" type="primary">pgi</name>
    <name type="ordered locus">ECIAI1_4250</name>
</gene>
<name>G6PI_ECO8A</name>
<dbReference type="EC" id="5.3.1.9" evidence="1"/>
<dbReference type="EMBL" id="CU928160">
    <property type="protein sequence ID" value="CAR01000.1"/>
    <property type="molecule type" value="Genomic_DNA"/>
</dbReference>
<dbReference type="RefSeq" id="WP_000790009.1">
    <property type="nucleotide sequence ID" value="NC_011741.1"/>
</dbReference>
<dbReference type="SMR" id="B7M7T4"/>
<dbReference type="GeneID" id="75204168"/>
<dbReference type="KEGG" id="ecr:ECIAI1_4250"/>
<dbReference type="HOGENOM" id="CLU_017947_3_1_6"/>
<dbReference type="UniPathway" id="UPA00109">
    <property type="reaction ID" value="UER00181"/>
</dbReference>
<dbReference type="UniPathway" id="UPA00138"/>
<dbReference type="GO" id="GO:0005829">
    <property type="term" value="C:cytosol"/>
    <property type="evidence" value="ECO:0007669"/>
    <property type="project" value="TreeGrafter"/>
</dbReference>
<dbReference type="GO" id="GO:0097367">
    <property type="term" value="F:carbohydrate derivative binding"/>
    <property type="evidence" value="ECO:0007669"/>
    <property type="project" value="InterPro"/>
</dbReference>
<dbReference type="GO" id="GO:0004347">
    <property type="term" value="F:glucose-6-phosphate isomerase activity"/>
    <property type="evidence" value="ECO:0007669"/>
    <property type="project" value="UniProtKB-UniRule"/>
</dbReference>
<dbReference type="GO" id="GO:0048029">
    <property type="term" value="F:monosaccharide binding"/>
    <property type="evidence" value="ECO:0007669"/>
    <property type="project" value="TreeGrafter"/>
</dbReference>
<dbReference type="GO" id="GO:0006094">
    <property type="term" value="P:gluconeogenesis"/>
    <property type="evidence" value="ECO:0007669"/>
    <property type="project" value="UniProtKB-UniRule"/>
</dbReference>
<dbReference type="GO" id="GO:0051156">
    <property type="term" value="P:glucose 6-phosphate metabolic process"/>
    <property type="evidence" value="ECO:0007669"/>
    <property type="project" value="TreeGrafter"/>
</dbReference>
<dbReference type="GO" id="GO:0006096">
    <property type="term" value="P:glycolytic process"/>
    <property type="evidence" value="ECO:0007669"/>
    <property type="project" value="UniProtKB-UniRule"/>
</dbReference>
<dbReference type="CDD" id="cd05015">
    <property type="entry name" value="SIS_PGI_1"/>
    <property type="match status" value="1"/>
</dbReference>
<dbReference type="CDD" id="cd05016">
    <property type="entry name" value="SIS_PGI_2"/>
    <property type="match status" value="1"/>
</dbReference>
<dbReference type="FunFam" id="1.10.1390.10:FF:000001">
    <property type="entry name" value="Glucose-6-phosphate isomerase"/>
    <property type="match status" value="1"/>
</dbReference>
<dbReference type="FunFam" id="3.40.50.10490:FF:000004">
    <property type="entry name" value="Glucose-6-phosphate isomerase"/>
    <property type="match status" value="1"/>
</dbReference>
<dbReference type="Gene3D" id="1.10.1390.10">
    <property type="match status" value="1"/>
</dbReference>
<dbReference type="Gene3D" id="3.40.50.10490">
    <property type="entry name" value="Glucose-6-phosphate isomerase like protein, domain 1"/>
    <property type="match status" value="2"/>
</dbReference>
<dbReference type="HAMAP" id="MF_00473">
    <property type="entry name" value="G6P_isomerase"/>
    <property type="match status" value="1"/>
</dbReference>
<dbReference type="InterPro" id="IPR001672">
    <property type="entry name" value="G6P_Isomerase"/>
</dbReference>
<dbReference type="InterPro" id="IPR023096">
    <property type="entry name" value="G6P_Isomerase_C"/>
</dbReference>
<dbReference type="InterPro" id="IPR018189">
    <property type="entry name" value="Phosphoglucose_isomerase_CS"/>
</dbReference>
<dbReference type="InterPro" id="IPR046348">
    <property type="entry name" value="SIS_dom_sf"/>
</dbReference>
<dbReference type="InterPro" id="IPR035476">
    <property type="entry name" value="SIS_PGI_1"/>
</dbReference>
<dbReference type="InterPro" id="IPR035482">
    <property type="entry name" value="SIS_PGI_2"/>
</dbReference>
<dbReference type="NCBIfam" id="NF001211">
    <property type="entry name" value="PRK00179.1"/>
    <property type="match status" value="1"/>
</dbReference>
<dbReference type="PANTHER" id="PTHR11469">
    <property type="entry name" value="GLUCOSE-6-PHOSPHATE ISOMERASE"/>
    <property type="match status" value="1"/>
</dbReference>
<dbReference type="PANTHER" id="PTHR11469:SF1">
    <property type="entry name" value="GLUCOSE-6-PHOSPHATE ISOMERASE"/>
    <property type="match status" value="1"/>
</dbReference>
<dbReference type="Pfam" id="PF00342">
    <property type="entry name" value="PGI"/>
    <property type="match status" value="1"/>
</dbReference>
<dbReference type="PRINTS" id="PR00662">
    <property type="entry name" value="G6PISOMERASE"/>
</dbReference>
<dbReference type="SUPFAM" id="SSF53697">
    <property type="entry name" value="SIS domain"/>
    <property type="match status" value="1"/>
</dbReference>
<dbReference type="PROSITE" id="PS00765">
    <property type="entry name" value="P_GLUCOSE_ISOMERASE_1"/>
    <property type="match status" value="1"/>
</dbReference>
<dbReference type="PROSITE" id="PS00174">
    <property type="entry name" value="P_GLUCOSE_ISOMERASE_2"/>
    <property type="match status" value="1"/>
</dbReference>
<dbReference type="PROSITE" id="PS51463">
    <property type="entry name" value="P_GLUCOSE_ISOMERASE_3"/>
    <property type="match status" value="1"/>
</dbReference>
<comment type="function">
    <text evidence="1">Catalyzes the reversible isomerization of glucose-6-phosphate to fructose-6-phosphate.</text>
</comment>
<comment type="catalytic activity">
    <reaction evidence="1">
        <text>alpha-D-glucose 6-phosphate = beta-D-fructose 6-phosphate</text>
        <dbReference type="Rhea" id="RHEA:11816"/>
        <dbReference type="ChEBI" id="CHEBI:57634"/>
        <dbReference type="ChEBI" id="CHEBI:58225"/>
        <dbReference type="EC" id="5.3.1.9"/>
    </reaction>
</comment>
<comment type="pathway">
    <text evidence="1">Carbohydrate biosynthesis; gluconeogenesis.</text>
</comment>
<comment type="pathway">
    <text evidence="1">Carbohydrate degradation; glycolysis; D-glyceraldehyde 3-phosphate and glycerone phosphate from D-glucose: step 2/4.</text>
</comment>
<comment type="subcellular location">
    <subcellularLocation>
        <location evidence="1">Cytoplasm</location>
    </subcellularLocation>
</comment>
<comment type="similarity">
    <text evidence="1">Belongs to the GPI family.</text>
</comment>
<reference key="1">
    <citation type="journal article" date="2009" name="PLoS Genet.">
        <title>Organised genome dynamics in the Escherichia coli species results in highly diverse adaptive paths.</title>
        <authorList>
            <person name="Touchon M."/>
            <person name="Hoede C."/>
            <person name="Tenaillon O."/>
            <person name="Barbe V."/>
            <person name="Baeriswyl S."/>
            <person name="Bidet P."/>
            <person name="Bingen E."/>
            <person name="Bonacorsi S."/>
            <person name="Bouchier C."/>
            <person name="Bouvet O."/>
            <person name="Calteau A."/>
            <person name="Chiapello H."/>
            <person name="Clermont O."/>
            <person name="Cruveiller S."/>
            <person name="Danchin A."/>
            <person name="Diard M."/>
            <person name="Dossat C."/>
            <person name="Karoui M.E."/>
            <person name="Frapy E."/>
            <person name="Garry L."/>
            <person name="Ghigo J.M."/>
            <person name="Gilles A.M."/>
            <person name="Johnson J."/>
            <person name="Le Bouguenec C."/>
            <person name="Lescat M."/>
            <person name="Mangenot S."/>
            <person name="Martinez-Jehanne V."/>
            <person name="Matic I."/>
            <person name="Nassif X."/>
            <person name="Oztas S."/>
            <person name="Petit M.A."/>
            <person name="Pichon C."/>
            <person name="Rouy Z."/>
            <person name="Ruf C.S."/>
            <person name="Schneider D."/>
            <person name="Tourret J."/>
            <person name="Vacherie B."/>
            <person name="Vallenet D."/>
            <person name="Medigue C."/>
            <person name="Rocha E.P.C."/>
            <person name="Denamur E."/>
        </authorList>
    </citation>
    <scope>NUCLEOTIDE SEQUENCE [LARGE SCALE GENOMIC DNA]</scope>
    <source>
        <strain>IAI1</strain>
    </source>
</reference>
<proteinExistence type="inferred from homology"/>
<accession>B7M7T4</accession>
<keyword id="KW-0007">Acetylation</keyword>
<keyword id="KW-0963">Cytoplasm</keyword>
<keyword id="KW-0312">Gluconeogenesis</keyword>
<keyword id="KW-0324">Glycolysis</keyword>
<keyword id="KW-0413">Isomerase</keyword>
<organism>
    <name type="scientific">Escherichia coli O8 (strain IAI1)</name>
    <dbReference type="NCBI Taxonomy" id="585034"/>
    <lineage>
        <taxon>Bacteria</taxon>
        <taxon>Pseudomonadati</taxon>
        <taxon>Pseudomonadota</taxon>
        <taxon>Gammaproteobacteria</taxon>
        <taxon>Enterobacterales</taxon>
        <taxon>Enterobacteriaceae</taxon>
        <taxon>Escherichia</taxon>
    </lineage>
</organism>
<feature type="chain" id="PRO_1000125719" description="Glucose-6-phosphate isomerase">
    <location>
        <begin position="1"/>
        <end position="549"/>
    </location>
</feature>
<feature type="active site" description="Proton donor" evidence="1">
    <location>
        <position position="355"/>
    </location>
</feature>
<feature type="active site" evidence="1">
    <location>
        <position position="386"/>
    </location>
</feature>
<feature type="active site" evidence="1">
    <location>
        <position position="514"/>
    </location>
</feature>
<feature type="modified residue" description="N6-acetyllysine" evidence="1">
    <location>
        <position position="80"/>
    </location>
</feature>
<feature type="modified residue" description="N6-acetyllysine" evidence="1">
    <location>
        <position position="228"/>
    </location>
</feature>
<feature type="modified residue" description="N6-acetyllysine" evidence="1">
    <location>
        <position position="234"/>
    </location>
</feature>
<evidence type="ECO:0000255" key="1">
    <source>
        <dbReference type="HAMAP-Rule" id="MF_00473"/>
    </source>
</evidence>
<sequence length="549" mass="61472">MKNINPTQTAAWQALQKHFDEMKDVTIADLFAKDGDRFSKFSATFGDQMLVDYSKNRITEETLAKLQDLAKECDLAGAIKSMFSGEKINRTENRAVLHVALRNRSNTPILVDGKDVMPEVNAVLEKMKTFSEAIISGEWKGYTGKAITDVVNIGIGGSDLGPYMVTEALRPYKNHLNMHFVSNVDGTHIAEVLKKVNPETTLFLVASKTFTTQETMTNAHSARDWFLKAAGDEKHVAKHFAALSTNAKAVGEFGIDTANMFEFWDWVGGRYSLWSAIGLSIVLSIGFDNFVELLSGAHAMDKHFSTTPAEKNLPVLLALIGIWYNNFFGAETEAILPYDQYMHRFAAYFQQGNMESNGKYVDRNGNVVDYQTGPIIWGEPGTNGQHAFYQLIHQGTKMVPCDFIAPAITHNPLSDHHQKLLSNFFAQTEALAFGKSREVVEQEYRDQGKDPATLDYVVPFKVFEGNRPTNSILLREITPFSLGALIALYEHKIFTQGVILNIFTFDQWGVELGKQLANRILPELKDDKEISSHDSSTNGLINRYKAWRG</sequence>